<proteinExistence type="inferred from homology"/>
<keyword id="KW-0997">Cell inner membrane</keyword>
<keyword id="KW-1003">Cell membrane</keyword>
<keyword id="KW-0407">Ion channel</keyword>
<keyword id="KW-0406">Ion transport</keyword>
<keyword id="KW-0472">Membrane</keyword>
<keyword id="KW-0614">Plasmid</keyword>
<keyword id="KW-1185">Reference proteome</keyword>
<keyword id="KW-0812">Transmembrane</keyword>
<keyword id="KW-1133">Transmembrane helix</keyword>
<keyword id="KW-0813">Transport</keyword>
<name>MSCS_WIGBR</name>
<gene>
    <name type="primary">mscS</name>
    <name type="synonym">WGpWb0005</name>
    <name type="ordered locus">WIGBRp0050</name>
</gene>
<organism>
    <name type="scientific">Wigglesworthia glossinidia brevipalpis</name>
    <dbReference type="NCBI Taxonomy" id="36870"/>
    <lineage>
        <taxon>Bacteria</taxon>
        <taxon>Pseudomonadati</taxon>
        <taxon>Pseudomonadota</taxon>
        <taxon>Gammaproteobacteria</taxon>
        <taxon>Enterobacterales</taxon>
        <taxon>Erwiniaceae</taxon>
        <taxon>Wigglesworthia</taxon>
    </lineage>
</organism>
<sequence>MNIYKEIDNASNWISDNHILFIKYISNIILSLIILIVGYSASKVTQKIIKNFMIKKNIDIIISEFFCSIIKYSILIFTIVTSLGCIGIQTTSIIAVIGAAGIAIGLALQGSLSNFAAGVLLVTLRYFRTGDYVNLCGVKGKIKTVQIFCTKIKTKDGKIIIIPNNKIISSNIINYSEELHRLMEVIISTEYTSDIKNVKEIIIDVLKKETRIVKEKKITVRLKNLGESSLDFLVRGWVYKKELKQTTSDILEKIKIELDKNKINIPYKQIDVNLKYSKEK</sequence>
<feature type="chain" id="PRO_0000420408" description="Small-conductance mechanosensitive channel">
    <location>
        <begin position="1"/>
        <end position="280"/>
    </location>
</feature>
<feature type="topological domain" description="Periplasmic" evidence="1">
    <location>
        <begin position="1"/>
        <end position="27"/>
    </location>
</feature>
<feature type="transmembrane region" description="Helical" evidence="1">
    <location>
        <begin position="28"/>
        <end position="49"/>
    </location>
</feature>
<feature type="topological domain" description="Cytoplasmic" evidence="1">
    <location>
        <begin position="50"/>
        <end position="64"/>
    </location>
</feature>
<feature type="transmembrane region" description="Helical" evidence="1">
    <location>
        <begin position="65"/>
        <end position="85"/>
    </location>
</feature>
<feature type="topological domain" description="Periplasmic" evidence="1">
    <location>
        <begin position="86"/>
        <end position="87"/>
    </location>
</feature>
<feature type="transmembrane region" description="Helical" evidence="1">
    <location>
        <begin position="88"/>
        <end position="108"/>
    </location>
</feature>
<feature type="topological domain" description="Cytoplasmic" evidence="1">
    <location>
        <begin position="109"/>
        <end position="280"/>
    </location>
</feature>
<protein>
    <recommendedName>
        <fullName>Small-conductance mechanosensitive channel</fullName>
    </recommendedName>
</protein>
<dbReference type="EMBL" id="AB063523">
    <property type="status" value="NOT_ANNOTATED_CDS"/>
    <property type="molecule type" value="Genomic_DNA"/>
</dbReference>
<dbReference type="SMR" id="P0DKS1"/>
<dbReference type="OrthoDB" id="9809206at2"/>
<dbReference type="Proteomes" id="UP000000562">
    <property type="component" value="Plasmid pWb1"/>
</dbReference>
<dbReference type="GO" id="GO:0005886">
    <property type="term" value="C:plasma membrane"/>
    <property type="evidence" value="ECO:0007669"/>
    <property type="project" value="UniProtKB-SubCell"/>
</dbReference>
<dbReference type="GO" id="GO:0008381">
    <property type="term" value="F:mechanosensitive monoatomic ion channel activity"/>
    <property type="evidence" value="ECO:0007669"/>
    <property type="project" value="InterPro"/>
</dbReference>
<dbReference type="Gene3D" id="1.10.287.1260">
    <property type="match status" value="1"/>
</dbReference>
<dbReference type="Gene3D" id="2.30.30.60">
    <property type="match status" value="1"/>
</dbReference>
<dbReference type="Gene3D" id="3.30.70.100">
    <property type="match status" value="1"/>
</dbReference>
<dbReference type="InterPro" id="IPR010920">
    <property type="entry name" value="LSM_dom_sf"/>
</dbReference>
<dbReference type="InterPro" id="IPR049142">
    <property type="entry name" value="MS_channel_1st"/>
</dbReference>
<dbReference type="InterPro" id="IPR049278">
    <property type="entry name" value="MS_channel_C"/>
</dbReference>
<dbReference type="InterPro" id="IPR008910">
    <property type="entry name" value="MSC_TM_helix"/>
</dbReference>
<dbReference type="InterPro" id="IPR045275">
    <property type="entry name" value="MscS_archaea/bacteria_type"/>
</dbReference>
<dbReference type="InterPro" id="IPR023408">
    <property type="entry name" value="MscS_beta-dom_sf"/>
</dbReference>
<dbReference type="InterPro" id="IPR006685">
    <property type="entry name" value="MscS_channel_2nd"/>
</dbReference>
<dbReference type="InterPro" id="IPR011066">
    <property type="entry name" value="MscS_channel_C_sf"/>
</dbReference>
<dbReference type="InterPro" id="IPR011014">
    <property type="entry name" value="MscS_channel_TM-2"/>
</dbReference>
<dbReference type="PANTHER" id="PTHR30221">
    <property type="entry name" value="SMALL-CONDUCTANCE MECHANOSENSITIVE CHANNEL"/>
    <property type="match status" value="1"/>
</dbReference>
<dbReference type="PANTHER" id="PTHR30221:SF1">
    <property type="entry name" value="SMALL-CONDUCTANCE MECHANOSENSITIVE CHANNEL"/>
    <property type="match status" value="1"/>
</dbReference>
<dbReference type="Pfam" id="PF21088">
    <property type="entry name" value="MS_channel_1st"/>
    <property type="match status" value="1"/>
</dbReference>
<dbReference type="Pfam" id="PF05552">
    <property type="entry name" value="MS_channel_1st_1"/>
    <property type="match status" value="1"/>
</dbReference>
<dbReference type="Pfam" id="PF00924">
    <property type="entry name" value="MS_channel_2nd"/>
    <property type="match status" value="1"/>
</dbReference>
<dbReference type="Pfam" id="PF21082">
    <property type="entry name" value="MS_channel_3rd"/>
    <property type="match status" value="1"/>
</dbReference>
<dbReference type="SUPFAM" id="SSF82689">
    <property type="entry name" value="Mechanosensitive channel protein MscS (YggB), C-terminal domain"/>
    <property type="match status" value="1"/>
</dbReference>
<dbReference type="SUPFAM" id="SSF82861">
    <property type="entry name" value="Mechanosensitive channel protein MscS (YggB), transmembrane region"/>
    <property type="match status" value="1"/>
</dbReference>
<dbReference type="SUPFAM" id="SSF50182">
    <property type="entry name" value="Sm-like ribonucleoproteins"/>
    <property type="match status" value="1"/>
</dbReference>
<comment type="function">
    <text evidence="1">Mechanosensitive channel that participates in the regulation of osmotic pressure changes within the cell, opening in response to stretch forces in the membrane lipid bilayer, without the need for other proteins. Contributes to normal resistance to hypoosmotic shock. Forms an ion channel of 1.0 nanosiemens conductance with a slight preference for anions.</text>
</comment>
<comment type="subunit">
    <text evidence="1">Homoheptamer.</text>
</comment>
<comment type="subcellular location">
    <subcellularLocation>
        <location evidence="1">Cell inner membrane</location>
        <topology evidence="1">Multi-pass membrane protein</topology>
    </subcellularLocation>
</comment>
<comment type="similarity">
    <text evidence="2">Belongs to the MscS (TC 1.A.23) family.</text>
</comment>
<accession>P0DKS1</accession>
<evidence type="ECO:0000250" key="1">
    <source>
        <dbReference type="UniProtKB" id="P0C0S1"/>
    </source>
</evidence>
<evidence type="ECO:0000305" key="2"/>
<reference key="1">
    <citation type="journal article" date="2002" name="Nat. Genet.">
        <title>Genome sequence of the endocellular obligate symbiont of tsetse flies, Wigglesworthia glossinidia.</title>
        <authorList>
            <person name="Akman L."/>
            <person name="Yamashita A."/>
            <person name="Watanabe H."/>
            <person name="Oshima K."/>
            <person name="Shiba T."/>
            <person name="Hattori M."/>
            <person name="Aksoy S."/>
        </authorList>
    </citation>
    <scope>NUCLEOTIDE SEQUENCE [LARGE SCALE GENOMIC DNA]</scope>
</reference>
<geneLocation type="plasmid">
    <name>pWb1</name>
    <name>pWig1</name>
</geneLocation>